<feature type="chain" id="PRO_0000296465" description="Large ribosomal subunit protein bL32">
    <location>
        <begin position="1"/>
        <end position="60"/>
    </location>
</feature>
<feature type="region of interest" description="Disordered" evidence="2">
    <location>
        <begin position="1"/>
        <end position="60"/>
    </location>
</feature>
<feature type="compositionally biased region" description="Basic residues" evidence="2">
    <location>
        <begin position="7"/>
        <end position="16"/>
    </location>
</feature>
<feature type="compositionally biased region" description="Polar residues" evidence="2">
    <location>
        <begin position="22"/>
        <end position="31"/>
    </location>
</feature>
<protein>
    <recommendedName>
        <fullName evidence="1">Large ribosomal subunit protein bL32</fullName>
    </recommendedName>
    <alternativeName>
        <fullName evidence="3">50S ribosomal protein L32</fullName>
    </alternativeName>
</protein>
<organism>
    <name type="scientific">Francisella tularensis subsp. holarctica (strain OSU18)</name>
    <dbReference type="NCBI Taxonomy" id="393011"/>
    <lineage>
        <taxon>Bacteria</taxon>
        <taxon>Pseudomonadati</taxon>
        <taxon>Pseudomonadota</taxon>
        <taxon>Gammaproteobacteria</taxon>
        <taxon>Thiotrichales</taxon>
        <taxon>Francisellaceae</taxon>
        <taxon>Francisella</taxon>
    </lineage>
</organism>
<sequence>MAVQQVKKSRSKRDMRRSHDSLTNPTLSTDKSTGELHLRHHVSPNGFYKGRKVVDTKSED</sequence>
<keyword id="KW-0687">Ribonucleoprotein</keyword>
<keyword id="KW-0689">Ribosomal protein</keyword>
<dbReference type="EMBL" id="CP000437">
    <property type="protein sequence ID" value="ABI82988.1"/>
    <property type="molecule type" value="Genomic_DNA"/>
</dbReference>
<dbReference type="RefSeq" id="WP_003016134.1">
    <property type="nucleotide sequence ID" value="NC_017463.1"/>
</dbReference>
<dbReference type="SMR" id="Q0BLP6"/>
<dbReference type="GeneID" id="75264932"/>
<dbReference type="KEGG" id="fth:FTH_1118"/>
<dbReference type="GO" id="GO:0015934">
    <property type="term" value="C:large ribosomal subunit"/>
    <property type="evidence" value="ECO:0007669"/>
    <property type="project" value="InterPro"/>
</dbReference>
<dbReference type="GO" id="GO:0003735">
    <property type="term" value="F:structural constituent of ribosome"/>
    <property type="evidence" value="ECO:0007669"/>
    <property type="project" value="InterPro"/>
</dbReference>
<dbReference type="GO" id="GO:0006412">
    <property type="term" value="P:translation"/>
    <property type="evidence" value="ECO:0007669"/>
    <property type="project" value="UniProtKB-UniRule"/>
</dbReference>
<dbReference type="HAMAP" id="MF_00340">
    <property type="entry name" value="Ribosomal_bL32"/>
    <property type="match status" value="1"/>
</dbReference>
<dbReference type="InterPro" id="IPR002677">
    <property type="entry name" value="Ribosomal_bL32"/>
</dbReference>
<dbReference type="InterPro" id="IPR044957">
    <property type="entry name" value="Ribosomal_bL32_bact"/>
</dbReference>
<dbReference type="InterPro" id="IPR011332">
    <property type="entry name" value="Ribosomal_zn-bd"/>
</dbReference>
<dbReference type="NCBIfam" id="TIGR01031">
    <property type="entry name" value="rpmF_bact"/>
    <property type="match status" value="1"/>
</dbReference>
<dbReference type="PANTHER" id="PTHR35534">
    <property type="entry name" value="50S RIBOSOMAL PROTEIN L32"/>
    <property type="match status" value="1"/>
</dbReference>
<dbReference type="PANTHER" id="PTHR35534:SF1">
    <property type="entry name" value="LARGE RIBOSOMAL SUBUNIT PROTEIN BL32"/>
    <property type="match status" value="1"/>
</dbReference>
<dbReference type="Pfam" id="PF01783">
    <property type="entry name" value="Ribosomal_L32p"/>
    <property type="match status" value="1"/>
</dbReference>
<dbReference type="SUPFAM" id="SSF57829">
    <property type="entry name" value="Zn-binding ribosomal proteins"/>
    <property type="match status" value="1"/>
</dbReference>
<name>RL32_FRATO</name>
<gene>
    <name evidence="1" type="primary">rpmF</name>
    <name type="ordered locus">FTH_1118</name>
</gene>
<accession>Q0BLP6</accession>
<proteinExistence type="inferred from homology"/>
<reference key="1">
    <citation type="journal article" date="2006" name="J. Bacteriol.">
        <title>Chromosome rearrangement and diversification of Francisella tularensis revealed by the type B (OSU18) genome sequence.</title>
        <authorList>
            <person name="Petrosino J.F."/>
            <person name="Xiang Q."/>
            <person name="Karpathy S.E."/>
            <person name="Jiang H."/>
            <person name="Yerrapragada S."/>
            <person name="Liu Y."/>
            <person name="Gioia J."/>
            <person name="Hemphill L."/>
            <person name="Gonzalez A."/>
            <person name="Raghavan T.M."/>
            <person name="Uzman A."/>
            <person name="Fox G.E."/>
            <person name="Highlander S."/>
            <person name="Reichard M."/>
            <person name="Morton R.J."/>
            <person name="Clinkenbeard K.D."/>
            <person name="Weinstock G.M."/>
        </authorList>
    </citation>
    <scope>NUCLEOTIDE SEQUENCE [LARGE SCALE GENOMIC DNA]</scope>
    <source>
        <strain>OSU18</strain>
    </source>
</reference>
<evidence type="ECO:0000255" key="1">
    <source>
        <dbReference type="HAMAP-Rule" id="MF_00340"/>
    </source>
</evidence>
<evidence type="ECO:0000256" key="2">
    <source>
        <dbReference type="SAM" id="MobiDB-lite"/>
    </source>
</evidence>
<evidence type="ECO:0000305" key="3"/>
<comment type="similarity">
    <text evidence="1">Belongs to the bacterial ribosomal protein bL32 family.</text>
</comment>